<comment type="function">
    <text evidence="1">Catalyzes the attachment of glutamate to tRNA(Glu) in a two-step reaction: glutamate is first activated by ATP to form Glu-AMP and then transferred to the acceptor end of tRNA(Glu).</text>
</comment>
<comment type="catalytic activity">
    <reaction evidence="1">
        <text>tRNA(Glu) + L-glutamate + ATP = L-glutamyl-tRNA(Glu) + AMP + diphosphate</text>
        <dbReference type="Rhea" id="RHEA:23540"/>
        <dbReference type="Rhea" id="RHEA-COMP:9663"/>
        <dbReference type="Rhea" id="RHEA-COMP:9680"/>
        <dbReference type="ChEBI" id="CHEBI:29985"/>
        <dbReference type="ChEBI" id="CHEBI:30616"/>
        <dbReference type="ChEBI" id="CHEBI:33019"/>
        <dbReference type="ChEBI" id="CHEBI:78442"/>
        <dbReference type="ChEBI" id="CHEBI:78520"/>
        <dbReference type="ChEBI" id="CHEBI:456215"/>
        <dbReference type="EC" id="6.1.1.17"/>
    </reaction>
</comment>
<comment type="subunit">
    <text evidence="1">Monomer.</text>
</comment>
<comment type="subcellular location">
    <subcellularLocation>
        <location evidence="1">Cytoplasm</location>
    </subcellularLocation>
</comment>
<comment type="similarity">
    <text evidence="1">Belongs to the class-I aminoacyl-tRNA synthetase family. Glutamate--tRNA ligase type 1 subfamily.</text>
</comment>
<sequence length="513" mass="58370">MNNNVITRFAPSPTGFLHIGSARTALFNYLFARHHNGKFLLRIEDTDKERSTKEAVEAIFSGLKWLGLDWNGEVIFQSKRNNLYKEAALKLLQNGKAYYCFTRQEEIERQRQQALENKQHFIFNSEWRDKDPSIYPTDIKPVIRLKTPREGSITIHDTLQGEVVIENSHIDDMVLLRADGTATYMLAVVVDDHDMGITHIIRGNDHLTNAARQLAIYQAFGYAVPSMTHIPLIHGADGAKLSKRHGALGIEAYKDMGYLPESLCNYLLRLGWSHGDDEIISMTQAIDWFNLDSLGKSPAKLDFAKMNSLNSHYLRMLDNDSLTSKIVEILEQNYNKLLQKLAYREEFGGNTERSTAAYIDIREDASTGLTYKLPLAVELPKKFKVSEQEIGYIKQAMPSLLVRSETLLELTRLAQIYLVDSPIIYSQDSKEIIENCDKNLIKQIIENLSELEQFDKESVQNKFKEIAAANDLKLNDIMKPVRALITGMTASPSVFEIAEILGKENILKRLKII</sequence>
<dbReference type="EC" id="6.1.1.17" evidence="1"/>
<dbReference type="EMBL" id="CP000848">
    <property type="protein sequence ID" value="ABV76552.1"/>
    <property type="molecule type" value="Genomic_DNA"/>
</dbReference>
<dbReference type="SMR" id="A8GT27"/>
<dbReference type="GeneID" id="79937630"/>
<dbReference type="KEGG" id="rri:A1G_05305"/>
<dbReference type="HOGENOM" id="CLU_015768_6_3_5"/>
<dbReference type="Proteomes" id="UP000006832">
    <property type="component" value="Chromosome"/>
</dbReference>
<dbReference type="GO" id="GO:0005829">
    <property type="term" value="C:cytosol"/>
    <property type="evidence" value="ECO:0007669"/>
    <property type="project" value="TreeGrafter"/>
</dbReference>
<dbReference type="GO" id="GO:0005524">
    <property type="term" value="F:ATP binding"/>
    <property type="evidence" value="ECO:0007669"/>
    <property type="project" value="UniProtKB-UniRule"/>
</dbReference>
<dbReference type="GO" id="GO:0004818">
    <property type="term" value="F:glutamate-tRNA ligase activity"/>
    <property type="evidence" value="ECO:0007669"/>
    <property type="project" value="UniProtKB-UniRule"/>
</dbReference>
<dbReference type="GO" id="GO:0000049">
    <property type="term" value="F:tRNA binding"/>
    <property type="evidence" value="ECO:0007669"/>
    <property type="project" value="InterPro"/>
</dbReference>
<dbReference type="GO" id="GO:0008270">
    <property type="term" value="F:zinc ion binding"/>
    <property type="evidence" value="ECO:0007669"/>
    <property type="project" value="InterPro"/>
</dbReference>
<dbReference type="GO" id="GO:0006424">
    <property type="term" value="P:glutamyl-tRNA aminoacylation"/>
    <property type="evidence" value="ECO:0007669"/>
    <property type="project" value="UniProtKB-UniRule"/>
</dbReference>
<dbReference type="CDD" id="cd00808">
    <property type="entry name" value="GluRS_core"/>
    <property type="match status" value="1"/>
</dbReference>
<dbReference type="FunFam" id="3.40.50.620:FF:000007">
    <property type="entry name" value="Glutamate--tRNA ligase"/>
    <property type="match status" value="1"/>
</dbReference>
<dbReference type="Gene3D" id="1.10.10.350">
    <property type="match status" value="1"/>
</dbReference>
<dbReference type="Gene3D" id="3.40.50.620">
    <property type="entry name" value="HUPs"/>
    <property type="match status" value="1"/>
</dbReference>
<dbReference type="HAMAP" id="MF_00022">
    <property type="entry name" value="Glu_tRNA_synth_type1"/>
    <property type="match status" value="1"/>
</dbReference>
<dbReference type="InterPro" id="IPR045462">
    <property type="entry name" value="aa-tRNA-synth_I_cd-bd"/>
</dbReference>
<dbReference type="InterPro" id="IPR020751">
    <property type="entry name" value="aa-tRNA-synth_I_codon-bd_sub2"/>
</dbReference>
<dbReference type="InterPro" id="IPR008925">
    <property type="entry name" value="aa_tRNA-synth_I_cd-bd_sf"/>
</dbReference>
<dbReference type="InterPro" id="IPR004527">
    <property type="entry name" value="Glu-tRNA-ligase_bac/mito"/>
</dbReference>
<dbReference type="InterPro" id="IPR000924">
    <property type="entry name" value="Glu/Gln-tRNA-synth"/>
</dbReference>
<dbReference type="InterPro" id="IPR020058">
    <property type="entry name" value="Glu/Gln-tRNA-synth_Ib_cat-dom"/>
</dbReference>
<dbReference type="InterPro" id="IPR049940">
    <property type="entry name" value="GluQ/Sye"/>
</dbReference>
<dbReference type="InterPro" id="IPR033910">
    <property type="entry name" value="GluRS_core"/>
</dbReference>
<dbReference type="InterPro" id="IPR014729">
    <property type="entry name" value="Rossmann-like_a/b/a_fold"/>
</dbReference>
<dbReference type="InterPro" id="IPR005728">
    <property type="entry name" value="RPE1"/>
</dbReference>
<dbReference type="NCBIfam" id="TIGR00464">
    <property type="entry name" value="gltX_bact"/>
    <property type="match status" value="1"/>
</dbReference>
<dbReference type="NCBIfam" id="TIGR01045">
    <property type="entry name" value="RPE1"/>
    <property type="match status" value="1"/>
</dbReference>
<dbReference type="PANTHER" id="PTHR43311">
    <property type="entry name" value="GLUTAMATE--TRNA LIGASE"/>
    <property type="match status" value="1"/>
</dbReference>
<dbReference type="PANTHER" id="PTHR43311:SF2">
    <property type="entry name" value="GLUTAMATE--TRNA LIGASE, MITOCHONDRIAL-RELATED"/>
    <property type="match status" value="1"/>
</dbReference>
<dbReference type="Pfam" id="PF19269">
    <property type="entry name" value="Anticodon_2"/>
    <property type="match status" value="1"/>
</dbReference>
<dbReference type="Pfam" id="PF00749">
    <property type="entry name" value="tRNA-synt_1c"/>
    <property type="match status" value="1"/>
</dbReference>
<dbReference type="PRINTS" id="PR00987">
    <property type="entry name" value="TRNASYNTHGLU"/>
</dbReference>
<dbReference type="SUPFAM" id="SSF48163">
    <property type="entry name" value="An anticodon-binding domain of class I aminoacyl-tRNA synthetases"/>
    <property type="match status" value="1"/>
</dbReference>
<dbReference type="SUPFAM" id="SSF52374">
    <property type="entry name" value="Nucleotidylyl transferase"/>
    <property type="match status" value="1"/>
</dbReference>
<gene>
    <name evidence="1" type="primary">gltX2</name>
    <name type="ordered locus">A1G_05305</name>
</gene>
<accession>A8GT27</accession>
<name>SYE2_RICRS</name>
<evidence type="ECO:0000255" key="1">
    <source>
        <dbReference type="HAMAP-Rule" id="MF_00022"/>
    </source>
</evidence>
<protein>
    <recommendedName>
        <fullName evidence="1">Glutamate--tRNA ligase 2</fullName>
        <ecNumber evidence="1">6.1.1.17</ecNumber>
    </recommendedName>
    <alternativeName>
        <fullName evidence="1">Glutamyl-tRNA synthetase 2</fullName>
        <shortName evidence="1">GluRS 2</shortName>
    </alternativeName>
</protein>
<proteinExistence type="inferred from homology"/>
<feature type="chain" id="PRO_0000367763" description="Glutamate--tRNA ligase 2">
    <location>
        <begin position="1"/>
        <end position="513"/>
    </location>
</feature>
<feature type="short sequence motif" description="'HIGH' region" evidence="1">
    <location>
        <begin position="11"/>
        <end position="21"/>
    </location>
</feature>
<feature type="short sequence motif" description="'KMSKS' region" evidence="1">
    <location>
        <begin position="240"/>
        <end position="244"/>
    </location>
</feature>
<feature type="binding site" evidence="1">
    <location>
        <position position="243"/>
    </location>
    <ligand>
        <name>ATP</name>
        <dbReference type="ChEBI" id="CHEBI:30616"/>
    </ligand>
</feature>
<reference key="1">
    <citation type="submission" date="2007-09" db="EMBL/GenBank/DDBJ databases">
        <title>Complete genome sequence of Rickettsia rickettsii.</title>
        <authorList>
            <person name="Madan A."/>
            <person name="Fahey J."/>
            <person name="Helton E."/>
            <person name="Ketteman M."/>
            <person name="Madan A."/>
            <person name="Rodrigues S."/>
            <person name="Sanchez A."/>
            <person name="Dasch G."/>
            <person name="Eremeeva M."/>
        </authorList>
    </citation>
    <scope>NUCLEOTIDE SEQUENCE [LARGE SCALE GENOMIC DNA]</scope>
    <source>
        <strain>Sheila Smith</strain>
    </source>
</reference>
<keyword id="KW-0030">Aminoacyl-tRNA synthetase</keyword>
<keyword id="KW-0067">ATP-binding</keyword>
<keyword id="KW-0963">Cytoplasm</keyword>
<keyword id="KW-0436">Ligase</keyword>
<keyword id="KW-0547">Nucleotide-binding</keyword>
<keyword id="KW-0648">Protein biosynthesis</keyword>
<organism>
    <name type="scientific">Rickettsia rickettsii (strain Sheila Smith)</name>
    <dbReference type="NCBI Taxonomy" id="392021"/>
    <lineage>
        <taxon>Bacteria</taxon>
        <taxon>Pseudomonadati</taxon>
        <taxon>Pseudomonadota</taxon>
        <taxon>Alphaproteobacteria</taxon>
        <taxon>Rickettsiales</taxon>
        <taxon>Rickettsiaceae</taxon>
        <taxon>Rickettsieae</taxon>
        <taxon>Rickettsia</taxon>
        <taxon>spotted fever group</taxon>
    </lineage>
</organism>